<evidence type="ECO:0000255" key="1"/>
<evidence type="ECO:0000255" key="2">
    <source>
        <dbReference type="PROSITE-ProRule" id="PRU00175"/>
    </source>
</evidence>
<evidence type="ECO:0000269" key="3">
    <source>
    </source>
</evidence>
<evidence type="ECO:0000303" key="4">
    <source>
    </source>
</evidence>
<evidence type="ECO:0000303" key="5">
    <source>
    </source>
</evidence>
<evidence type="ECO:0000305" key="6"/>
<evidence type="ECO:0007744" key="7">
    <source>
    </source>
</evidence>
<comment type="function">
    <text evidence="3">E3 ubiquitin-protein ligase which promotes polyubiquitination and degradation by the proteasome pathway of ZIC2.</text>
</comment>
<comment type="catalytic activity">
    <reaction>
        <text>S-ubiquitinyl-[E2 ubiquitin-conjugating enzyme]-L-cysteine + [acceptor protein]-L-lysine = [E2 ubiquitin-conjugating enzyme]-L-cysteine + N(6)-ubiquitinyl-[acceptor protein]-L-lysine.</text>
        <dbReference type="EC" id="2.3.2.27"/>
    </reaction>
</comment>
<comment type="pathway">
    <text>Protein modification; protein ubiquitination.</text>
</comment>
<comment type="subunit">
    <text evidence="3">Interacts with ZIC2.</text>
</comment>
<comment type="subcellular location">
    <subcellularLocation>
        <location evidence="3">Endoplasmic reticulum membrane</location>
        <topology evidence="3">Single-pass membrane protein</topology>
    </subcellularLocation>
    <subcellularLocation>
        <location evidence="3">Nucleus envelope</location>
    </subcellularLocation>
</comment>
<comment type="alternative products">
    <event type="alternative splicing"/>
    <isoform>
        <id>Q3U827-1</id>
        <name>1</name>
        <sequence type="displayed"/>
    </isoform>
    <isoform>
        <id>Q3U827-2</id>
        <name>2</name>
        <sequence type="described" ref="VSP_021741"/>
    </isoform>
    <isoform>
        <id>Q3U827-3</id>
        <name>3</name>
        <sequence type="described" ref="VSP_021743"/>
    </isoform>
    <isoform>
        <id>Q3U827-4</id>
        <name>4</name>
        <sequence type="described" ref="VSP_021741 VSP_021742"/>
    </isoform>
</comment>
<comment type="tissue specificity">
    <text evidence="3">brain, kidney, testis and uterus. membrane protein. Nucleus envelope.</text>
</comment>
<comment type="developmental stage">
    <text evidence="3">Detected in the ventricular zone of the lateral ventricle in brain from 13.5 dpc and 17.5 dpc embryos.</text>
</comment>
<comment type="domain">
    <text evidence="3">The RING-type zinc finger domain mediates polyubiquitination of the interacting protein.</text>
</comment>
<feature type="chain" id="PRO_0000261618" description="E3 ubiquitin-protein ligase RNF180">
    <location>
        <begin position="1"/>
        <end position="592"/>
    </location>
</feature>
<feature type="topological domain" description="Cytoplasmic" evidence="1">
    <location>
        <begin position="1"/>
        <end position="564"/>
    </location>
</feature>
<feature type="transmembrane region" description="Helical" evidence="1">
    <location>
        <begin position="565"/>
        <end position="585"/>
    </location>
</feature>
<feature type="topological domain" description="Extracellular" evidence="1">
    <location>
        <begin position="586"/>
        <end position="592"/>
    </location>
</feature>
<feature type="zinc finger region" description="RING-type" evidence="2">
    <location>
        <begin position="432"/>
        <end position="474"/>
    </location>
</feature>
<feature type="region of interest" description="Interaction with ZIC2" evidence="3">
    <location>
        <begin position="282"/>
        <end position="489"/>
    </location>
</feature>
<feature type="modified residue" description="Phosphoserine" evidence="7">
    <location>
        <position position="231"/>
    </location>
</feature>
<feature type="splice variant" id="VSP_021741" description="In isoform 2 and isoform 4." evidence="4 5">
    <location>
        <position position="46"/>
    </location>
</feature>
<feature type="splice variant" id="VSP_021742" description="In isoform 4." evidence="5">
    <original>ELNNATKTFFTKEYLKIKQSFQKSSSAKWPLPSCRKGFHLFGGFHRRAAPVTRRQFPHGAHRMDYLHFEDDSRGWWFDMDMVIIYIYSVNWVIGFVVFCFLCYFFFPF</original>
    <variation>AQAGSCGRLIPIFQRKPPR</variation>
    <location>
        <begin position="485"/>
        <end position="592"/>
    </location>
</feature>
<feature type="splice variant" id="VSP_021743" description="In isoform 3." evidence="5">
    <original>FHRRAAPVTRRQFPHGAHRMDYLHFEDDSRGWWFDMDMVIIYIYSVNWVIGFVVFCFLCYFFFPF</original>
    <variation>KPAQRLKPCRILDTGMRYEAMEGCCLLTCSHGWRAQPAFLSHSGHCLG</variation>
    <location>
        <begin position="528"/>
        <end position="592"/>
    </location>
</feature>
<feature type="sequence conflict" description="In Ref. 1; BAE31192/BAE30351." evidence="6" ref="1">
    <original>D</original>
    <variation>H</variation>
    <location>
        <position position="266"/>
    </location>
</feature>
<feature type="sequence conflict" description="In Ref. 1; BAC27782." evidence="6" ref="1">
    <original>N</original>
    <variation>D</variation>
    <location>
        <position position="487"/>
    </location>
</feature>
<feature type="sequence conflict" description="In Ref. 1; BAE31192/BAE30351." evidence="6" ref="1">
    <original>F</original>
    <variation>L</variation>
    <location>
        <position position="525"/>
    </location>
</feature>
<feature type="sequence conflict" description="In Ref. 1; BAE31192/BAE30351." evidence="6" ref="1">
    <original>Y</original>
    <variation>F</variation>
    <location>
        <position position="587"/>
    </location>
</feature>
<organism>
    <name type="scientific">Mus musculus</name>
    <name type="common">Mouse</name>
    <dbReference type="NCBI Taxonomy" id="10090"/>
    <lineage>
        <taxon>Eukaryota</taxon>
        <taxon>Metazoa</taxon>
        <taxon>Chordata</taxon>
        <taxon>Craniata</taxon>
        <taxon>Vertebrata</taxon>
        <taxon>Euteleostomi</taxon>
        <taxon>Mammalia</taxon>
        <taxon>Eutheria</taxon>
        <taxon>Euarchontoglires</taxon>
        <taxon>Glires</taxon>
        <taxon>Rodentia</taxon>
        <taxon>Myomorpha</taxon>
        <taxon>Muroidea</taxon>
        <taxon>Muridae</taxon>
        <taxon>Murinae</taxon>
        <taxon>Mus</taxon>
        <taxon>Mus</taxon>
    </lineage>
</organism>
<reference key="1">
    <citation type="journal article" date="2005" name="Science">
        <title>The transcriptional landscape of the mammalian genome.</title>
        <authorList>
            <person name="Carninci P."/>
            <person name="Kasukawa T."/>
            <person name="Katayama S."/>
            <person name="Gough J."/>
            <person name="Frith M.C."/>
            <person name="Maeda N."/>
            <person name="Oyama R."/>
            <person name="Ravasi T."/>
            <person name="Lenhard B."/>
            <person name="Wells C."/>
            <person name="Kodzius R."/>
            <person name="Shimokawa K."/>
            <person name="Bajic V.B."/>
            <person name="Brenner S.E."/>
            <person name="Batalov S."/>
            <person name="Forrest A.R."/>
            <person name="Zavolan M."/>
            <person name="Davis M.J."/>
            <person name="Wilming L.G."/>
            <person name="Aidinis V."/>
            <person name="Allen J.E."/>
            <person name="Ambesi-Impiombato A."/>
            <person name="Apweiler R."/>
            <person name="Aturaliya R.N."/>
            <person name="Bailey T.L."/>
            <person name="Bansal M."/>
            <person name="Baxter L."/>
            <person name="Beisel K.W."/>
            <person name="Bersano T."/>
            <person name="Bono H."/>
            <person name="Chalk A.M."/>
            <person name="Chiu K.P."/>
            <person name="Choudhary V."/>
            <person name="Christoffels A."/>
            <person name="Clutterbuck D.R."/>
            <person name="Crowe M.L."/>
            <person name="Dalla E."/>
            <person name="Dalrymple B.P."/>
            <person name="de Bono B."/>
            <person name="Della Gatta G."/>
            <person name="di Bernardo D."/>
            <person name="Down T."/>
            <person name="Engstrom P."/>
            <person name="Fagiolini M."/>
            <person name="Faulkner G."/>
            <person name="Fletcher C.F."/>
            <person name="Fukushima T."/>
            <person name="Furuno M."/>
            <person name="Futaki S."/>
            <person name="Gariboldi M."/>
            <person name="Georgii-Hemming P."/>
            <person name="Gingeras T.R."/>
            <person name="Gojobori T."/>
            <person name="Green R.E."/>
            <person name="Gustincich S."/>
            <person name="Harbers M."/>
            <person name="Hayashi Y."/>
            <person name="Hensch T.K."/>
            <person name="Hirokawa N."/>
            <person name="Hill D."/>
            <person name="Huminiecki L."/>
            <person name="Iacono M."/>
            <person name="Ikeo K."/>
            <person name="Iwama A."/>
            <person name="Ishikawa T."/>
            <person name="Jakt M."/>
            <person name="Kanapin A."/>
            <person name="Katoh M."/>
            <person name="Kawasawa Y."/>
            <person name="Kelso J."/>
            <person name="Kitamura H."/>
            <person name="Kitano H."/>
            <person name="Kollias G."/>
            <person name="Krishnan S.P."/>
            <person name="Kruger A."/>
            <person name="Kummerfeld S.K."/>
            <person name="Kurochkin I.V."/>
            <person name="Lareau L.F."/>
            <person name="Lazarevic D."/>
            <person name="Lipovich L."/>
            <person name="Liu J."/>
            <person name="Liuni S."/>
            <person name="McWilliam S."/>
            <person name="Madan Babu M."/>
            <person name="Madera M."/>
            <person name="Marchionni L."/>
            <person name="Matsuda H."/>
            <person name="Matsuzawa S."/>
            <person name="Miki H."/>
            <person name="Mignone F."/>
            <person name="Miyake S."/>
            <person name="Morris K."/>
            <person name="Mottagui-Tabar S."/>
            <person name="Mulder N."/>
            <person name="Nakano N."/>
            <person name="Nakauchi H."/>
            <person name="Ng P."/>
            <person name="Nilsson R."/>
            <person name="Nishiguchi S."/>
            <person name="Nishikawa S."/>
            <person name="Nori F."/>
            <person name="Ohara O."/>
            <person name="Okazaki Y."/>
            <person name="Orlando V."/>
            <person name="Pang K.C."/>
            <person name="Pavan W.J."/>
            <person name="Pavesi G."/>
            <person name="Pesole G."/>
            <person name="Petrovsky N."/>
            <person name="Piazza S."/>
            <person name="Reed J."/>
            <person name="Reid J.F."/>
            <person name="Ring B.Z."/>
            <person name="Ringwald M."/>
            <person name="Rost B."/>
            <person name="Ruan Y."/>
            <person name="Salzberg S.L."/>
            <person name="Sandelin A."/>
            <person name="Schneider C."/>
            <person name="Schoenbach C."/>
            <person name="Sekiguchi K."/>
            <person name="Semple C.A."/>
            <person name="Seno S."/>
            <person name="Sessa L."/>
            <person name="Sheng Y."/>
            <person name="Shibata Y."/>
            <person name="Shimada H."/>
            <person name="Shimada K."/>
            <person name="Silva D."/>
            <person name="Sinclair B."/>
            <person name="Sperling S."/>
            <person name="Stupka E."/>
            <person name="Sugiura K."/>
            <person name="Sultana R."/>
            <person name="Takenaka Y."/>
            <person name="Taki K."/>
            <person name="Tammoja K."/>
            <person name="Tan S.L."/>
            <person name="Tang S."/>
            <person name="Taylor M.S."/>
            <person name="Tegner J."/>
            <person name="Teichmann S.A."/>
            <person name="Ueda H.R."/>
            <person name="van Nimwegen E."/>
            <person name="Verardo R."/>
            <person name="Wei C.L."/>
            <person name="Yagi K."/>
            <person name="Yamanishi H."/>
            <person name="Zabarovsky E."/>
            <person name="Zhu S."/>
            <person name="Zimmer A."/>
            <person name="Hide W."/>
            <person name="Bult C."/>
            <person name="Grimmond S.M."/>
            <person name="Teasdale R.D."/>
            <person name="Liu E.T."/>
            <person name="Brusic V."/>
            <person name="Quackenbush J."/>
            <person name="Wahlestedt C."/>
            <person name="Mattick J.S."/>
            <person name="Hume D.A."/>
            <person name="Kai C."/>
            <person name="Sasaki D."/>
            <person name="Tomaru Y."/>
            <person name="Fukuda S."/>
            <person name="Kanamori-Katayama M."/>
            <person name="Suzuki M."/>
            <person name="Aoki J."/>
            <person name="Arakawa T."/>
            <person name="Iida J."/>
            <person name="Imamura K."/>
            <person name="Itoh M."/>
            <person name="Kato T."/>
            <person name="Kawaji H."/>
            <person name="Kawagashira N."/>
            <person name="Kawashima T."/>
            <person name="Kojima M."/>
            <person name="Kondo S."/>
            <person name="Konno H."/>
            <person name="Nakano K."/>
            <person name="Ninomiya N."/>
            <person name="Nishio T."/>
            <person name="Okada M."/>
            <person name="Plessy C."/>
            <person name="Shibata K."/>
            <person name="Shiraki T."/>
            <person name="Suzuki S."/>
            <person name="Tagami M."/>
            <person name="Waki K."/>
            <person name="Watahiki A."/>
            <person name="Okamura-Oho Y."/>
            <person name="Suzuki H."/>
            <person name="Kawai J."/>
            <person name="Hayashizaki Y."/>
        </authorList>
    </citation>
    <scope>NUCLEOTIDE SEQUENCE [LARGE SCALE MRNA] (ISOFORMS 1; 2; 3 AND 4)</scope>
    <source>
        <strain>C57BL/6J</strain>
        <tissue>Bone marrow</tissue>
        <tissue>Epididymis</tissue>
        <tissue>Head</tissue>
        <tissue>Inner ear</tissue>
        <tissue>Olfactory bulb</tissue>
    </source>
</reference>
<reference key="2">
    <citation type="journal article" date="2004" name="Genome Res.">
        <title>The status, quality, and expansion of the NIH full-length cDNA project: the Mammalian Gene Collection (MGC).</title>
        <authorList>
            <consortium name="The MGC Project Team"/>
        </authorList>
    </citation>
    <scope>NUCLEOTIDE SEQUENCE [LARGE SCALE MRNA] (ISOFORM 2)</scope>
    <source>
        <strain>C57BL/6J</strain>
        <tissue>Brain</tissue>
    </source>
</reference>
<reference key="3">
    <citation type="journal article" date="2008" name="Genes Cells">
        <title>Rines/RNF180, a novel RING finger gene-encoded product, is a membrane-bound ubiquitin ligase.</title>
        <authorList>
            <person name="Ogawa M."/>
            <person name="Mizugishi K."/>
            <person name="Ishiguro A."/>
            <person name="Koyabu Y."/>
            <person name="Imai Y."/>
            <person name="Takahashi R."/>
            <person name="Mikoshiba K."/>
            <person name="Aruga J."/>
        </authorList>
    </citation>
    <scope>FUNCTION</scope>
    <scope>TOPOLOGY</scope>
    <scope>DOMAIN</scope>
    <scope>TISSUE SPECIFICITY</scope>
    <scope>DEVELOPMENTAL STAGE</scope>
    <scope>INTERACTION WITH ZIC2</scope>
    <scope>SUBCELLULAR LOCATION</scope>
</reference>
<reference key="4">
    <citation type="journal article" date="2010" name="Cell">
        <title>A tissue-specific atlas of mouse protein phosphorylation and expression.</title>
        <authorList>
            <person name="Huttlin E.L."/>
            <person name="Jedrychowski M.P."/>
            <person name="Elias J.E."/>
            <person name="Goswami T."/>
            <person name="Rad R."/>
            <person name="Beausoleil S.A."/>
            <person name="Villen J."/>
            <person name="Haas W."/>
            <person name="Sowa M.E."/>
            <person name="Gygi S.P."/>
        </authorList>
    </citation>
    <scope>PHOSPHORYLATION [LARGE SCALE ANALYSIS] AT SER-231</scope>
    <scope>IDENTIFICATION BY MASS SPECTROMETRY [LARGE SCALE ANALYSIS]</scope>
    <source>
        <tissue>Brain</tissue>
    </source>
</reference>
<protein>
    <recommendedName>
        <fullName>E3 ubiquitin-protein ligase RNF180</fullName>
        <ecNumber>2.3.2.27</ecNumber>
    </recommendedName>
    <alternativeName>
        <fullName>RING finger protein 180</fullName>
    </alternativeName>
    <alternativeName>
        <fullName evidence="6">RING-type E3 ubiquitin transferase RNF180</fullName>
    </alternativeName>
</protein>
<accession>Q3U827</accession>
<accession>Q3UW39</accession>
<accession>Q80ZX1</accession>
<accession>Q8CCR1</accession>
<accession>Q9CXV6</accession>
<sequence>MKRSEESTSTQSPEEQTGTLHCWRCRKCIASSGCFMTPLETQVVEQDRHESVDAQNTCHLWHMNVDALPEWISCLLQKAQWTVGKLNCPFCGARLGGFNFVSTPKCSCGQLAAVHLCKSRTDHQAAQGGRLMRPALKHLPHPGVPSGCDKETLLTGGGSKTRNHWLLSMARNSNGLGRLTEALCLEVRATYFEMKNEKLLFKASDPKCQPFVPQPDTGRCPSRASHRKSHSLDLNISEKLILLPTLYEIHRKPTAYPRLNETGPIDLSGLALPCSNSSCSFQSPPSFDPNMLLHRLSVAPHETQAQRGRECQCGLEASSVYSDHANANSLPFLMDLPSAGRSVLEASDQEEHLSQLDFLRSASFPLGTINHRLNNRERSKLRTLRRQQRRERWLQKQGKYSGVGLLDHMTVSNEMSTDEETEFPEEKDSYMCAVCLDVYFNPYMCYPCHHIFCEPCLRTLAKDNPASTPCPLCRTIISRVFLQTELNNATKTFFTKEYLKIKQSFQKSSSAKWPLPSCRKGFHLFGGFHRRAAPVTRRQFPHGAHRMDYLHFEDDSRGWWFDMDMVIIYIYSVNWVIGFVVFCFLCYFFFPF</sequence>
<gene>
    <name type="primary">Rnf180</name>
    <name type="synonym">Rines</name>
</gene>
<name>RN180_MOUSE</name>
<proteinExistence type="evidence at protein level"/>
<keyword id="KW-0025">Alternative splicing</keyword>
<keyword id="KW-0256">Endoplasmic reticulum</keyword>
<keyword id="KW-0472">Membrane</keyword>
<keyword id="KW-0479">Metal-binding</keyword>
<keyword id="KW-0539">Nucleus</keyword>
<keyword id="KW-0597">Phosphoprotein</keyword>
<keyword id="KW-1185">Reference proteome</keyword>
<keyword id="KW-0808">Transferase</keyword>
<keyword id="KW-0812">Transmembrane</keyword>
<keyword id="KW-1133">Transmembrane helix</keyword>
<keyword id="KW-0833">Ubl conjugation pathway</keyword>
<keyword id="KW-0862">Zinc</keyword>
<keyword id="KW-0863">Zinc-finger</keyword>
<dbReference type="EC" id="2.3.2.27"/>
<dbReference type="EMBL" id="AK013941">
    <property type="protein sequence ID" value="BAB29072.1"/>
    <property type="molecule type" value="mRNA"/>
</dbReference>
<dbReference type="EMBL" id="AK032259">
    <property type="protein sequence ID" value="BAC27782.1"/>
    <property type="molecule type" value="mRNA"/>
</dbReference>
<dbReference type="EMBL" id="AK136632">
    <property type="protein sequence ID" value="BAE23080.1"/>
    <property type="molecule type" value="mRNA"/>
</dbReference>
<dbReference type="EMBL" id="AK151379">
    <property type="protein sequence ID" value="BAE30351.1"/>
    <property type="molecule type" value="mRNA"/>
</dbReference>
<dbReference type="EMBL" id="AK152404">
    <property type="protein sequence ID" value="BAE31192.1"/>
    <property type="molecule type" value="mRNA"/>
</dbReference>
<dbReference type="EMBL" id="AK157911">
    <property type="protein sequence ID" value="BAE34259.1"/>
    <property type="molecule type" value="mRNA"/>
</dbReference>
<dbReference type="EMBL" id="BC046775">
    <property type="protein sequence ID" value="AAH46775.1"/>
    <property type="molecule type" value="mRNA"/>
</dbReference>
<dbReference type="EMBL" id="BC075700">
    <property type="protein sequence ID" value="AAH75700.1"/>
    <property type="molecule type" value="mRNA"/>
</dbReference>
<dbReference type="CCDS" id="CCDS36775.1">
    <molecule id="Q3U827-3"/>
</dbReference>
<dbReference type="CCDS" id="CCDS88517.1">
    <molecule id="Q3U827-2"/>
</dbReference>
<dbReference type="CCDS" id="CCDS88518.1">
    <molecule id="Q3U827-1"/>
</dbReference>
<dbReference type="RefSeq" id="NP_001347819.1">
    <molecule id="Q3U827-2"/>
    <property type="nucleotide sequence ID" value="NM_001360890.1"/>
</dbReference>
<dbReference type="RefSeq" id="NP_001347820.1">
    <molecule id="Q3U827-1"/>
    <property type="nucleotide sequence ID" value="NM_001360891.1"/>
</dbReference>
<dbReference type="RefSeq" id="NP_082210.1">
    <molecule id="Q3U827-3"/>
    <property type="nucleotide sequence ID" value="NM_027934.2"/>
</dbReference>
<dbReference type="RefSeq" id="XP_006517820.1">
    <property type="nucleotide sequence ID" value="XM_006517757.2"/>
</dbReference>
<dbReference type="RefSeq" id="XP_006517822.1">
    <molecule id="Q3U827-1"/>
    <property type="nucleotide sequence ID" value="XM_006517759.5"/>
</dbReference>
<dbReference type="RefSeq" id="XP_006517823.1">
    <molecule id="Q3U827-1"/>
    <property type="nucleotide sequence ID" value="XM_006517760.3"/>
</dbReference>
<dbReference type="RefSeq" id="XP_006517824.3">
    <property type="nucleotide sequence ID" value="XM_006517761.3"/>
</dbReference>
<dbReference type="RefSeq" id="XP_006517825.1">
    <property type="nucleotide sequence ID" value="XM_006517762.2"/>
</dbReference>
<dbReference type="RefSeq" id="XP_011242998.1">
    <property type="nucleotide sequence ID" value="XM_011244696.2"/>
</dbReference>
<dbReference type="RefSeq" id="XP_017171096.1">
    <molecule id="Q3U827-2"/>
    <property type="nucleotide sequence ID" value="XM_017315607.3"/>
</dbReference>
<dbReference type="RefSeq" id="XP_030103273.1">
    <molecule id="Q3U827-1"/>
    <property type="nucleotide sequence ID" value="XM_030247413.2"/>
</dbReference>
<dbReference type="RefSeq" id="XP_030103274.1">
    <molecule id="Q3U827-2"/>
    <property type="nucleotide sequence ID" value="XM_030247414.1"/>
</dbReference>
<dbReference type="RefSeq" id="XP_036014063.1">
    <molecule id="Q3U827-4"/>
    <property type="nucleotide sequence ID" value="XM_036158170.1"/>
</dbReference>
<dbReference type="RefSeq" id="XP_036014064.1">
    <molecule id="Q3U827-4"/>
    <property type="nucleotide sequence ID" value="XM_036158171.1"/>
</dbReference>
<dbReference type="BioGRID" id="214948">
    <property type="interactions" value="2"/>
</dbReference>
<dbReference type="FunCoup" id="Q3U827">
    <property type="interactions" value="255"/>
</dbReference>
<dbReference type="STRING" id="10090.ENSMUSP00000153678"/>
<dbReference type="iPTMnet" id="Q3U827"/>
<dbReference type="PhosphoSitePlus" id="Q3U827"/>
<dbReference type="PaxDb" id="10090-ENSMUSP00000064624"/>
<dbReference type="ProteomicsDB" id="300417">
    <molecule id="Q3U827-1"/>
</dbReference>
<dbReference type="ProteomicsDB" id="300418">
    <molecule id="Q3U827-2"/>
</dbReference>
<dbReference type="ProteomicsDB" id="300419">
    <molecule id="Q3U827-3"/>
</dbReference>
<dbReference type="ProteomicsDB" id="300420">
    <molecule id="Q3U827-4"/>
</dbReference>
<dbReference type="Antibodypedia" id="2028">
    <property type="antibodies" value="125 antibodies from 20 providers"/>
</dbReference>
<dbReference type="Ensembl" id="ENSMUST00000069686.7">
    <molecule id="Q3U827-3"/>
    <property type="protein sequence ID" value="ENSMUSP00000064624.7"/>
    <property type="gene ID" value="ENSMUSG00000021720.12"/>
</dbReference>
<dbReference type="Ensembl" id="ENSMUST00000224011.2">
    <molecule id="Q3U827-3"/>
    <property type="protein sequence ID" value="ENSMUSP00000153678.2"/>
    <property type="gene ID" value="ENSMUSG00000021720.12"/>
</dbReference>
<dbReference type="Ensembl" id="ENSMUST00000224662.2">
    <molecule id="Q3U827-1"/>
    <property type="protein sequence ID" value="ENSMUSP00000153506.2"/>
    <property type="gene ID" value="ENSMUSG00000021720.12"/>
</dbReference>
<dbReference type="Ensembl" id="ENSMUST00000226044.2">
    <molecule id="Q3U827-2"/>
    <property type="protein sequence ID" value="ENSMUSP00000153478.2"/>
    <property type="gene ID" value="ENSMUSG00000021720.12"/>
</dbReference>
<dbReference type="GeneID" id="71816"/>
<dbReference type="KEGG" id="mmu:71816"/>
<dbReference type="UCSC" id="uc007rtr.1">
    <molecule id="Q3U827-1"/>
    <property type="organism name" value="mouse"/>
</dbReference>
<dbReference type="UCSC" id="uc007rts.1">
    <molecule id="Q3U827-2"/>
    <property type="organism name" value="mouse"/>
</dbReference>
<dbReference type="UCSC" id="uc007rtt.1">
    <molecule id="Q3U827-3"/>
    <property type="organism name" value="mouse"/>
</dbReference>
<dbReference type="AGR" id="MGI:1919066"/>
<dbReference type="CTD" id="285671"/>
<dbReference type="MGI" id="MGI:1919066">
    <property type="gene designation" value="Rnf180"/>
</dbReference>
<dbReference type="VEuPathDB" id="HostDB:ENSMUSG00000021720"/>
<dbReference type="eggNOG" id="ENOG502QQJ8">
    <property type="taxonomic scope" value="Eukaryota"/>
</dbReference>
<dbReference type="GeneTree" id="ENSGT00950000182909"/>
<dbReference type="HOGENOM" id="CLU_039803_0_0_1"/>
<dbReference type="InParanoid" id="Q3U827"/>
<dbReference type="OMA" id="CETQTQR"/>
<dbReference type="OrthoDB" id="6105938at2759"/>
<dbReference type="PhylomeDB" id="Q3U827"/>
<dbReference type="TreeFam" id="TF328580"/>
<dbReference type="BRENDA" id="2.3.2.27">
    <property type="organism ID" value="3474"/>
</dbReference>
<dbReference type="UniPathway" id="UPA00143"/>
<dbReference type="BioGRID-ORCS" id="71816">
    <property type="hits" value="3 hits in 77 CRISPR screens"/>
</dbReference>
<dbReference type="ChiTaRS" id="Rnf180">
    <property type="organism name" value="mouse"/>
</dbReference>
<dbReference type="PRO" id="PR:Q3U827"/>
<dbReference type="Proteomes" id="UP000000589">
    <property type="component" value="Chromosome 13"/>
</dbReference>
<dbReference type="RNAct" id="Q3U827">
    <property type="molecule type" value="protein"/>
</dbReference>
<dbReference type="Bgee" id="ENSMUSG00000021720">
    <property type="expression patterns" value="Expressed in lens of camera-type eye and 193 other cell types or tissues"/>
</dbReference>
<dbReference type="ExpressionAtlas" id="Q3U827">
    <property type="expression patterns" value="baseline and differential"/>
</dbReference>
<dbReference type="GO" id="GO:0005789">
    <property type="term" value="C:endoplasmic reticulum membrane"/>
    <property type="evidence" value="ECO:0000314"/>
    <property type="project" value="MGI"/>
</dbReference>
<dbReference type="GO" id="GO:0005635">
    <property type="term" value="C:nuclear envelope"/>
    <property type="evidence" value="ECO:0007669"/>
    <property type="project" value="UniProtKB-SubCell"/>
</dbReference>
<dbReference type="GO" id="GO:0031624">
    <property type="term" value="F:ubiquitin conjugating enzyme binding"/>
    <property type="evidence" value="ECO:0000314"/>
    <property type="project" value="MGI"/>
</dbReference>
<dbReference type="GO" id="GO:0061630">
    <property type="term" value="F:ubiquitin protein ligase activity"/>
    <property type="evidence" value="ECO:0000314"/>
    <property type="project" value="MGI"/>
</dbReference>
<dbReference type="GO" id="GO:0008270">
    <property type="term" value="F:zinc ion binding"/>
    <property type="evidence" value="ECO:0007669"/>
    <property type="project" value="UniProtKB-KW"/>
</dbReference>
<dbReference type="GO" id="GO:0030534">
    <property type="term" value="P:adult behavior"/>
    <property type="evidence" value="ECO:0000315"/>
    <property type="project" value="MGI"/>
</dbReference>
<dbReference type="GO" id="GO:0042415">
    <property type="term" value="P:norepinephrine metabolic process"/>
    <property type="evidence" value="ECO:0000315"/>
    <property type="project" value="MGI"/>
</dbReference>
<dbReference type="GO" id="GO:0032436">
    <property type="term" value="P:positive regulation of proteasomal ubiquitin-dependent protein catabolic process"/>
    <property type="evidence" value="ECO:0000314"/>
    <property type="project" value="MGI"/>
</dbReference>
<dbReference type="GO" id="GO:0031398">
    <property type="term" value="P:positive regulation of protein ubiquitination"/>
    <property type="evidence" value="ECO:0000314"/>
    <property type="project" value="MGI"/>
</dbReference>
<dbReference type="GO" id="GO:0000209">
    <property type="term" value="P:protein polyubiquitination"/>
    <property type="evidence" value="ECO:0000314"/>
    <property type="project" value="MGI"/>
</dbReference>
<dbReference type="GO" id="GO:0042428">
    <property type="term" value="P:serotonin metabolic process"/>
    <property type="evidence" value="ECO:0000315"/>
    <property type="project" value="MGI"/>
</dbReference>
<dbReference type="CDD" id="cd16554">
    <property type="entry name" value="RING-HC_RNF180"/>
    <property type="match status" value="1"/>
</dbReference>
<dbReference type="FunFam" id="3.30.40.10:FF:000316">
    <property type="entry name" value="E3 ubiquitin-protein ligase RNF180"/>
    <property type="match status" value="1"/>
</dbReference>
<dbReference type="Gene3D" id="3.30.40.10">
    <property type="entry name" value="Zinc/RING finger domain, C3HC4 (zinc finger)"/>
    <property type="match status" value="1"/>
</dbReference>
<dbReference type="InterPro" id="IPR033263">
    <property type="entry name" value="RNF180"/>
</dbReference>
<dbReference type="InterPro" id="IPR045790">
    <property type="entry name" value="RNF180_C"/>
</dbReference>
<dbReference type="InterPro" id="IPR001841">
    <property type="entry name" value="Znf_RING"/>
</dbReference>
<dbReference type="InterPro" id="IPR013083">
    <property type="entry name" value="Znf_RING/FYVE/PHD"/>
</dbReference>
<dbReference type="InterPro" id="IPR017907">
    <property type="entry name" value="Znf_RING_CS"/>
</dbReference>
<dbReference type="PANTHER" id="PTHR46717">
    <property type="entry name" value="E3 UBIQUITIN-PROTEIN LIGASE RNF180"/>
    <property type="match status" value="1"/>
</dbReference>
<dbReference type="PANTHER" id="PTHR46717:SF1">
    <property type="entry name" value="E3 UBIQUITIN-PROTEIN LIGASE RNF180"/>
    <property type="match status" value="1"/>
</dbReference>
<dbReference type="Pfam" id="PF19332">
    <property type="entry name" value="RNF180_C"/>
    <property type="match status" value="1"/>
</dbReference>
<dbReference type="Pfam" id="PF13920">
    <property type="entry name" value="zf-C3HC4_3"/>
    <property type="match status" value="1"/>
</dbReference>
<dbReference type="SMART" id="SM00184">
    <property type="entry name" value="RING"/>
    <property type="match status" value="1"/>
</dbReference>
<dbReference type="SUPFAM" id="SSF57850">
    <property type="entry name" value="RING/U-box"/>
    <property type="match status" value="1"/>
</dbReference>
<dbReference type="PROSITE" id="PS00518">
    <property type="entry name" value="ZF_RING_1"/>
    <property type="match status" value="1"/>
</dbReference>
<dbReference type="PROSITE" id="PS50089">
    <property type="entry name" value="ZF_RING_2"/>
    <property type="match status" value="1"/>
</dbReference>